<reference key="1">
    <citation type="journal article" date="2016" name="BMC Genomics">
        <title>Comparative genomic and transcriptomic analyses of the Fuzhuan brick tea-fermentation fungus Aspergillus cristatus.</title>
        <authorList>
            <person name="Ge Y."/>
            <person name="Wang Y."/>
            <person name="Liu Y."/>
            <person name="Tan Y."/>
            <person name="Ren X."/>
            <person name="Zhang X."/>
            <person name="Hyde K.D."/>
            <person name="Liu Y."/>
            <person name="Liu Z."/>
        </authorList>
    </citation>
    <scope>NUCLEOTIDE SEQUENCE [LARGE SCALE GENOMIC DNA]</scope>
    <source>
        <strain>GZAAS20.1005</strain>
    </source>
</reference>
<reference key="2">
    <citation type="journal article" date="2022" name="Microb. Cell Fact.">
        <title>Efficient production of a cyclic dipeptide (cyclo-TA) using heterologous expression system of filamentous fungus Aspergillus oryzae.</title>
        <authorList>
            <person name="Qi J."/>
            <person name="Han H."/>
            <person name="Sui D."/>
            <person name="Tan S."/>
            <person name="Liu C."/>
            <person name="Wang P."/>
            <person name="Xie C."/>
            <person name="Xia X."/>
            <person name="Gao J.M."/>
            <person name="Liu C."/>
        </authorList>
    </citation>
    <scope>FUNCTION</scope>
    <scope>PATHWAY</scope>
</reference>
<organism>
    <name type="scientific">Aspergillus cristatus</name>
    <name type="common">Chinese Fuzhuan brick tea-fermentation fungus</name>
    <name type="synonym">Eurotium cristatum</name>
    <dbReference type="NCBI Taxonomy" id="573508"/>
    <lineage>
        <taxon>Eukaryota</taxon>
        <taxon>Fungi</taxon>
        <taxon>Dikarya</taxon>
        <taxon>Ascomycota</taxon>
        <taxon>Pezizomycotina</taxon>
        <taxon>Eurotiomycetes</taxon>
        <taxon>Eurotiomycetidae</taxon>
        <taxon>Eurotiales</taxon>
        <taxon>Aspergillaceae</taxon>
        <taxon>Aspergillus</taxon>
        <taxon>Aspergillus subgen. Aspergillus</taxon>
    </lineage>
</organism>
<keyword id="KW-0637">Prenyltransferase</keyword>
<keyword id="KW-1185">Reference proteome</keyword>
<keyword id="KW-0808">Transferase</keyword>
<accession>A0A1E3B0T7</accession>
<feature type="chain" id="PRO_0000456855" description="Reverse prenyltransferase criA">
    <location>
        <begin position="1"/>
        <end position="431"/>
    </location>
</feature>
<feature type="binding site" evidence="5">
    <location>
        <position position="104"/>
    </location>
    <ligand>
        <name>dimethylallyl diphosphate</name>
        <dbReference type="ChEBI" id="CHEBI:57623"/>
    </ligand>
</feature>
<feature type="binding site" evidence="5">
    <location>
        <position position="193"/>
    </location>
    <ligand>
        <name>dimethylallyl diphosphate</name>
        <dbReference type="ChEBI" id="CHEBI:57623"/>
    </ligand>
</feature>
<feature type="binding site" evidence="5">
    <location>
        <position position="195"/>
    </location>
    <ligand>
        <name>dimethylallyl diphosphate</name>
        <dbReference type="ChEBI" id="CHEBI:57623"/>
    </ligand>
</feature>
<feature type="binding site" evidence="5">
    <location>
        <position position="262"/>
    </location>
    <ligand>
        <name>dimethylallyl diphosphate</name>
        <dbReference type="ChEBI" id="CHEBI:57623"/>
    </ligand>
</feature>
<feature type="binding site" evidence="5">
    <location>
        <position position="264"/>
    </location>
    <ligand>
        <name>dimethylallyl diphosphate</name>
        <dbReference type="ChEBI" id="CHEBI:57623"/>
    </ligand>
</feature>
<feature type="binding site" evidence="5">
    <location>
        <position position="347"/>
    </location>
    <ligand>
        <name>dimethylallyl diphosphate</name>
        <dbReference type="ChEBI" id="CHEBI:57623"/>
    </ligand>
</feature>
<feature type="binding site" evidence="5">
    <location>
        <position position="412"/>
    </location>
    <ligand>
        <name>dimethylallyl diphosphate</name>
        <dbReference type="ChEBI" id="CHEBI:57623"/>
    </ligand>
</feature>
<feature type="binding site" evidence="5">
    <location>
        <position position="416"/>
    </location>
    <ligand>
        <name>dimethylallyl diphosphate</name>
        <dbReference type="ChEBI" id="CHEBI:57623"/>
    </ligand>
</feature>
<feature type="site" description="Required for regioselectivity" evidence="5">
    <location>
        <position position="106"/>
    </location>
</feature>
<comment type="function">
    <text evidence="1 2 3 6">Reverse prenyltransferase; part of the gene cluster that mediates the biosynthesis of echinulin family alkaloid (PubMed:35843946). The pathway begins with the biosynthesis of the cyclic dipeptide cyclo-L-Trp-L-Ala (cyclo-TA) by the NRPS criC via condensation of L-alanine and L-tryptophan (PubMed:35843946). The prenyltransferase criA then catalyzes the first prenylation step, a reverse prenylation reaction at C2, to yield preechinulin (By similarity). Preechinulin is the substrate of the cytochrome P450 monooxygenase criE that catalyzes the formation of the double bond between C10 and C11 to produce neoechulin A (By similarity). The unique prenyltransferase criF functions as a competitive enzyme with criE for preechinulin metabolization and uses preechinulin for effective regiospecific prenylations. Preechinulin is prenylated by criF at C5 or C7. C7-prenylation leads to accumulation of tardioxopiperazine B without further modification by criF. In contrast, the C5-prenylated tardioxopiperazine A can be prenylated again by criF, predominantly at C7 to form echinulin or less frequently at C4 to give variecolorin L. CriF also accepts neoechilunin A to produce varlecolorin G (prenylation at C5) or isoechinulin A (prenylation at C7). CriF further converts isoechinulin A into dehydroechinulin. Moreover, a yet unidentified enzyme can also convert neoechilunin A into neoechilunin B by introducing a double bond between positions C14 and C17 and thus provides a further substrate to criF for C5 and C7 prenylation (By similarity).</text>
</comment>
<comment type="catalytic activity">
    <reaction evidence="1">
        <text>cyclo(L-tryptophyl-L-alanyl) + dimethylallyl diphosphate = preechinulin + diphosphate</text>
        <dbReference type="Rhea" id="RHEA:73767"/>
        <dbReference type="ChEBI" id="CHEBI:33019"/>
        <dbReference type="ChEBI" id="CHEBI:57623"/>
        <dbReference type="ChEBI" id="CHEBI:193002"/>
        <dbReference type="ChEBI" id="CHEBI:193003"/>
    </reaction>
    <physiologicalReaction direction="left-to-right" evidence="1">
        <dbReference type="Rhea" id="RHEA:73768"/>
    </physiologicalReaction>
</comment>
<comment type="pathway">
    <text evidence="1">Secondary metabolite biosynthesis.</text>
</comment>
<comment type="pathway">
    <text evidence="1">Alkaloid biosynthesis.</text>
</comment>
<comment type="subunit">
    <text evidence="4">Monomer.</text>
</comment>
<comment type="similarity">
    <text evidence="8">Belongs to the tryptophan dimethylallyltransferase family.</text>
</comment>
<name>CRIA_ASPCR</name>
<gene>
    <name evidence="7" type="primary">criA</name>
    <name type="ORF">SI65_10015</name>
</gene>
<dbReference type="EC" id="2.5.1.-" evidence="1"/>
<dbReference type="EMBL" id="JXNT01000024">
    <property type="protein sequence ID" value="ODM14529.1"/>
    <property type="molecule type" value="Genomic_DNA"/>
</dbReference>
<dbReference type="SMR" id="A0A1E3B0T7"/>
<dbReference type="STRING" id="573508.A0A1E3B0T7"/>
<dbReference type="VEuPathDB" id="FungiDB:SI65_10015"/>
<dbReference type="OrthoDB" id="5392033at2759"/>
<dbReference type="Proteomes" id="UP000094569">
    <property type="component" value="Unassembled WGS sequence"/>
</dbReference>
<dbReference type="GO" id="GO:0004659">
    <property type="term" value="F:prenyltransferase activity"/>
    <property type="evidence" value="ECO:0007669"/>
    <property type="project" value="UniProtKB-KW"/>
</dbReference>
<dbReference type="GO" id="GO:0009820">
    <property type="term" value="P:alkaloid metabolic process"/>
    <property type="evidence" value="ECO:0007669"/>
    <property type="project" value="InterPro"/>
</dbReference>
<dbReference type="CDD" id="cd13929">
    <property type="entry name" value="PT-DMATS_CymD"/>
    <property type="match status" value="1"/>
</dbReference>
<dbReference type="InterPro" id="IPR033964">
    <property type="entry name" value="Aro_prenylTrfase"/>
</dbReference>
<dbReference type="InterPro" id="IPR017795">
    <property type="entry name" value="Aro_prenylTrfase_DMATS"/>
</dbReference>
<dbReference type="InterPro" id="IPR012148">
    <property type="entry name" value="DMATS-type_fun"/>
</dbReference>
<dbReference type="NCBIfam" id="TIGR03429">
    <property type="entry name" value="arom_pren_DMATS"/>
    <property type="match status" value="1"/>
</dbReference>
<dbReference type="PANTHER" id="PTHR40627">
    <property type="entry name" value="INDOLE PRENYLTRANSFERASE TDIB-RELATED"/>
    <property type="match status" value="1"/>
</dbReference>
<dbReference type="PANTHER" id="PTHR40627:SF3">
    <property type="entry name" value="PRENYLTRANSFERASE ASQH2-RELATED"/>
    <property type="match status" value="1"/>
</dbReference>
<dbReference type="Pfam" id="PF11991">
    <property type="entry name" value="Trp_DMAT"/>
    <property type="match status" value="1"/>
</dbReference>
<dbReference type="PIRSF" id="PIRSF000509">
    <property type="entry name" value="Trp_DMAT"/>
    <property type="match status" value="1"/>
</dbReference>
<dbReference type="SFLD" id="SFLDS00036">
    <property type="entry name" value="Aromatic_Prenyltransferase"/>
    <property type="match status" value="1"/>
</dbReference>
<dbReference type="SFLD" id="SFLDG01162">
    <property type="entry name" value="I"/>
    <property type="match status" value="1"/>
</dbReference>
<evidence type="ECO:0000250" key="1">
    <source>
        <dbReference type="UniProtKB" id="A0A017SP50"/>
    </source>
</evidence>
<evidence type="ECO:0000250" key="2">
    <source>
        <dbReference type="UniProtKB" id="A0A017SR40"/>
    </source>
</evidence>
<evidence type="ECO:0000250" key="3">
    <source>
        <dbReference type="UniProtKB" id="A0A2D1VNM2"/>
    </source>
</evidence>
<evidence type="ECO:0000250" key="4">
    <source>
        <dbReference type="UniProtKB" id="I4AY86"/>
    </source>
</evidence>
<evidence type="ECO:0000250" key="5">
    <source>
        <dbReference type="UniProtKB" id="Q4WAW7"/>
    </source>
</evidence>
<evidence type="ECO:0000269" key="6">
    <source>
    </source>
</evidence>
<evidence type="ECO:0000303" key="7">
    <source>
    </source>
</evidence>
<evidence type="ECO:0000305" key="8"/>
<sequence length="431" mass="49485">MTSYTESSEESGSRMPSEILTSYYDYPTHDQESWWRDTGPLFGRFLKGAGYDVHTQYQYLVFFIKNILPSLGPYPARWRSTITPTGLPIEYSLNFQKNSRPLLRIGFEPLSRFSGTAQDPYNKIATADLLNQLAKVQLHDFDTQLFNHFMNDFDLSRAETEALQKQGGINGKSTVRSQTAFGFDLKGGRVSVKGYAFAGLKNRATGIPVGQLISDSVRKLEPQMHCWDSFSILNDYMEKSDGWNEYSFVSWDCVDIERSRLKLYGVHNAVTWEKVKEMWTLGGRIEEDATIKAGLELLQHMWSLLRIDEGNRDYKGGFAADNGGKTLPIIWNYEINKGSPHPAPKFYFPVHGENDLQVSKSISEFFSHLGWDDHARQYPHLLRQIYPNQNISLTERLQAWISFAYHEHTGPYLSVYYYAAERPPWGSDQVK</sequence>
<protein>
    <recommendedName>
        <fullName evidence="7">Reverse prenyltransferase criA</fullName>
        <ecNumber evidence="1">2.5.1.-</ecNumber>
    </recommendedName>
    <alternativeName>
        <fullName evidence="7">Echinulin biosynthesis cluster protein A</fullName>
    </alternativeName>
</protein>
<proteinExistence type="inferred from homology"/>